<dbReference type="EC" id="1.14.99.60" evidence="1"/>
<dbReference type="EMBL" id="AE008923">
    <property type="protein sequence ID" value="AAM35377.1"/>
    <property type="molecule type" value="Genomic_DNA"/>
</dbReference>
<dbReference type="RefSeq" id="WP_011050347.1">
    <property type="nucleotide sequence ID" value="NC_003919.1"/>
</dbReference>
<dbReference type="SMR" id="Q8PQ42"/>
<dbReference type="GeneID" id="66909692"/>
<dbReference type="KEGG" id="xac:XAC0486"/>
<dbReference type="eggNOG" id="COG2941">
    <property type="taxonomic scope" value="Bacteria"/>
</dbReference>
<dbReference type="HOGENOM" id="CLU_088601_0_0_6"/>
<dbReference type="UniPathway" id="UPA00232"/>
<dbReference type="Proteomes" id="UP000000576">
    <property type="component" value="Chromosome"/>
</dbReference>
<dbReference type="GO" id="GO:0005886">
    <property type="term" value="C:plasma membrane"/>
    <property type="evidence" value="ECO:0007669"/>
    <property type="project" value="UniProtKB-SubCell"/>
</dbReference>
<dbReference type="GO" id="GO:0008682">
    <property type="term" value="F:3-demethoxyubiquinol 3-hydroxylase activity"/>
    <property type="evidence" value="ECO:0007669"/>
    <property type="project" value="UniProtKB-EC"/>
</dbReference>
<dbReference type="GO" id="GO:0046872">
    <property type="term" value="F:metal ion binding"/>
    <property type="evidence" value="ECO:0007669"/>
    <property type="project" value="UniProtKB-KW"/>
</dbReference>
<dbReference type="GO" id="GO:0006744">
    <property type="term" value="P:ubiquinone biosynthetic process"/>
    <property type="evidence" value="ECO:0007669"/>
    <property type="project" value="UniProtKB-UniRule"/>
</dbReference>
<dbReference type="CDD" id="cd01042">
    <property type="entry name" value="DMQH"/>
    <property type="match status" value="1"/>
</dbReference>
<dbReference type="FunFam" id="1.20.1260.10:FF:000013">
    <property type="entry name" value="2-nonaprenyl-3-methyl-6-methoxy-1,4-benzoquinol hydroxylase"/>
    <property type="match status" value="1"/>
</dbReference>
<dbReference type="Gene3D" id="1.20.1260.10">
    <property type="match status" value="1"/>
</dbReference>
<dbReference type="HAMAP" id="MF_01658">
    <property type="entry name" value="COQ7"/>
    <property type="match status" value="1"/>
</dbReference>
<dbReference type="InterPro" id="IPR047809">
    <property type="entry name" value="COQ7_proteobact"/>
</dbReference>
<dbReference type="InterPro" id="IPR012347">
    <property type="entry name" value="Ferritin-like"/>
</dbReference>
<dbReference type="InterPro" id="IPR009078">
    <property type="entry name" value="Ferritin-like_SF"/>
</dbReference>
<dbReference type="InterPro" id="IPR011566">
    <property type="entry name" value="Ubq_synth_Coq7"/>
</dbReference>
<dbReference type="NCBIfam" id="NF033656">
    <property type="entry name" value="DMQ_monoox_COQ7"/>
    <property type="match status" value="1"/>
</dbReference>
<dbReference type="PANTHER" id="PTHR11237:SF4">
    <property type="entry name" value="5-DEMETHOXYUBIQUINONE HYDROXYLASE, MITOCHONDRIAL"/>
    <property type="match status" value="1"/>
</dbReference>
<dbReference type="PANTHER" id="PTHR11237">
    <property type="entry name" value="COENZYME Q10 BIOSYNTHESIS PROTEIN 7"/>
    <property type="match status" value="1"/>
</dbReference>
<dbReference type="Pfam" id="PF03232">
    <property type="entry name" value="COQ7"/>
    <property type="match status" value="1"/>
</dbReference>
<dbReference type="SUPFAM" id="SSF47240">
    <property type="entry name" value="Ferritin-like"/>
    <property type="match status" value="1"/>
</dbReference>
<accession>Q8PQ42</accession>
<reference key="1">
    <citation type="journal article" date="2002" name="Nature">
        <title>Comparison of the genomes of two Xanthomonas pathogens with differing host specificities.</title>
        <authorList>
            <person name="da Silva A.C.R."/>
            <person name="Ferro J.A."/>
            <person name="Reinach F.C."/>
            <person name="Farah C.S."/>
            <person name="Furlan L.R."/>
            <person name="Quaggio R.B."/>
            <person name="Monteiro-Vitorello C.B."/>
            <person name="Van Sluys M.A."/>
            <person name="Almeida N.F. Jr."/>
            <person name="Alves L.M.C."/>
            <person name="do Amaral A.M."/>
            <person name="Bertolini M.C."/>
            <person name="Camargo L.E.A."/>
            <person name="Camarotte G."/>
            <person name="Cannavan F."/>
            <person name="Cardozo J."/>
            <person name="Chambergo F."/>
            <person name="Ciapina L.P."/>
            <person name="Cicarelli R.M.B."/>
            <person name="Coutinho L.L."/>
            <person name="Cursino-Santos J.R."/>
            <person name="El-Dorry H."/>
            <person name="Faria J.B."/>
            <person name="Ferreira A.J.S."/>
            <person name="Ferreira R.C.C."/>
            <person name="Ferro M.I.T."/>
            <person name="Formighieri E.F."/>
            <person name="Franco M.C."/>
            <person name="Greggio C.C."/>
            <person name="Gruber A."/>
            <person name="Katsuyama A.M."/>
            <person name="Kishi L.T."/>
            <person name="Leite R.P."/>
            <person name="Lemos E.G.M."/>
            <person name="Lemos M.V.F."/>
            <person name="Locali E.C."/>
            <person name="Machado M.A."/>
            <person name="Madeira A.M.B.N."/>
            <person name="Martinez-Rossi N.M."/>
            <person name="Martins E.C."/>
            <person name="Meidanis J."/>
            <person name="Menck C.F.M."/>
            <person name="Miyaki C.Y."/>
            <person name="Moon D.H."/>
            <person name="Moreira L.M."/>
            <person name="Novo M.T.M."/>
            <person name="Okura V.K."/>
            <person name="Oliveira M.C."/>
            <person name="Oliveira V.R."/>
            <person name="Pereira H.A."/>
            <person name="Rossi A."/>
            <person name="Sena J.A.D."/>
            <person name="Silva C."/>
            <person name="de Souza R.F."/>
            <person name="Spinola L.A.F."/>
            <person name="Takita M.A."/>
            <person name="Tamura R.E."/>
            <person name="Teixeira E.C."/>
            <person name="Tezza R.I.D."/>
            <person name="Trindade dos Santos M."/>
            <person name="Truffi D."/>
            <person name="Tsai S.M."/>
            <person name="White F.F."/>
            <person name="Setubal J.C."/>
            <person name="Kitajima J.P."/>
        </authorList>
    </citation>
    <scope>NUCLEOTIDE SEQUENCE [LARGE SCALE GENOMIC DNA]</scope>
    <source>
        <strain>306</strain>
    </source>
</reference>
<comment type="function">
    <text evidence="1">Catalyzes the hydroxylation of 2-nonaprenyl-3-methyl-6-methoxy-1,4-benzoquinol during ubiquinone biosynthesis.</text>
</comment>
<comment type="catalytic activity">
    <reaction evidence="1">
        <text>a 5-methoxy-2-methyl-3-(all-trans-polyprenyl)benzene-1,4-diol + AH2 + O2 = a 3-demethylubiquinol + A + H2O</text>
        <dbReference type="Rhea" id="RHEA:50908"/>
        <dbReference type="Rhea" id="RHEA-COMP:10859"/>
        <dbReference type="Rhea" id="RHEA-COMP:10914"/>
        <dbReference type="ChEBI" id="CHEBI:13193"/>
        <dbReference type="ChEBI" id="CHEBI:15377"/>
        <dbReference type="ChEBI" id="CHEBI:15379"/>
        <dbReference type="ChEBI" id="CHEBI:17499"/>
        <dbReference type="ChEBI" id="CHEBI:84167"/>
        <dbReference type="ChEBI" id="CHEBI:84422"/>
        <dbReference type="EC" id="1.14.99.60"/>
    </reaction>
</comment>
<comment type="cofactor">
    <cofactor evidence="1">
        <name>Fe cation</name>
        <dbReference type="ChEBI" id="CHEBI:24875"/>
    </cofactor>
    <text evidence="1">Binds 2 iron ions per subunit.</text>
</comment>
<comment type="pathway">
    <text evidence="1">Cofactor biosynthesis; ubiquinone biosynthesis.</text>
</comment>
<comment type="subcellular location">
    <subcellularLocation>
        <location evidence="1">Cell membrane</location>
        <topology evidence="1">Peripheral membrane protein</topology>
    </subcellularLocation>
</comment>
<comment type="similarity">
    <text evidence="1">Belongs to the COQ7 family.</text>
</comment>
<proteinExistence type="inferred from homology"/>
<sequence length="217" mass="23963">MTQISPTRLHSPLDRLLVEAQRALDTVFGNPPAERPNPAADTPDVVLDPEQRLHAAGLMRINHVGEVCAQGLYFGQAAVARDAHTRHHLLEAAQEETDHLAWCADRLHELDSRPSLFNPVWYAGSYALGALAGLRGDDWSLGFVVETERQVEAHLDEHLETLPQSDQRSRAILRVMKIDEARHADQAEQAGARPLPAPIPSAMALASKLMKTVAYRL</sequence>
<keyword id="KW-1003">Cell membrane</keyword>
<keyword id="KW-0408">Iron</keyword>
<keyword id="KW-0472">Membrane</keyword>
<keyword id="KW-0479">Metal-binding</keyword>
<keyword id="KW-0503">Monooxygenase</keyword>
<keyword id="KW-0560">Oxidoreductase</keyword>
<keyword id="KW-0831">Ubiquinone biosynthesis</keyword>
<gene>
    <name evidence="1" type="primary">coq7</name>
    <name type="ordered locus">XAC0486</name>
</gene>
<evidence type="ECO:0000255" key="1">
    <source>
        <dbReference type="HAMAP-Rule" id="MF_01658"/>
    </source>
</evidence>
<organism>
    <name type="scientific">Xanthomonas axonopodis pv. citri (strain 306)</name>
    <dbReference type="NCBI Taxonomy" id="190486"/>
    <lineage>
        <taxon>Bacteria</taxon>
        <taxon>Pseudomonadati</taxon>
        <taxon>Pseudomonadota</taxon>
        <taxon>Gammaproteobacteria</taxon>
        <taxon>Lysobacterales</taxon>
        <taxon>Lysobacteraceae</taxon>
        <taxon>Xanthomonas</taxon>
    </lineage>
</organism>
<protein>
    <recommendedName>
        <fullName evidence="1">3-demethoxyubiquinol 3-hydroxylase</fullName>
        <shortName evidence="1">DMQ hydroxylase</shortName>
        <ecNumber evidence="1">1.14.99.60</ecNumber>
    </recommendedName>
    <alternativeName>
        <fullName evidence="1">2-nonaprenyl-3-methyl-6-methoxy-1,4-benzoquinol hydroxylase</fullName>
    </alternativeName>
</protein>
<name>COQ7_XANAC</name>
<feature type="chain" id="PRO_0000338733" description="3-demethoxyubiquinol 3-hydroxylase">
    <location>
        <begin position="1"/>
        <end position="217"/>
    </location>
</feature>
<feature type="binding site" evidence="1">
    <location>
        <position position="66"/>
    </location>
    <ligand>
        <name>Fe cation</name>
        <dbReference type="ChEBI" id="CHEBI:24875"/>
        <label>1</label>
    </ligand>
</feature>
<feature type="binding site" evidence="1">
    <location>
        <position position="96"/>
    </location>
    <ligand>
        <name>Fe cation</name>
        <dbReference type="ChEBI" id="CHEBI:24875"/>
        <label>1</label>
    </ligand>
</feature>
<feature type="binding site" evidence="1">
    <location>
        <position position="96"/>
    </location>
    <ligand>
        <name>Fe cation</name>
        <dbReference type="ChEBI" id="CHEBI:24875"/>
        <label>2</label>
    </ligand>
</feature>
<feature type="binding site" evidence="1">
    <location>
        <position position="99"/>
    </location>
    <ligand>
        <name>Fe cation</name>
        <dbReference type="ChEBI" id="CHEBI:24875"/>
        <label>1</label>
    </ligand>
</feature>
<feature type="binding site" evidence="1">
    <location>
        <position position="148"/>
    </location>
    <ligand>
        <name>Fe cation</name>
        <dbReference type="ChEBI" id="CHEBI:24875"/>
        <label>2</label>
    </ligand>
</feature>
<feature type="binding site" evidence="1">
    <location>
        <position position="180"/>
    </location>
    <ligand>
        <name>Fe cation</name>
        <dbReference type="ChEBI" id="CHEBI:24875"/>
        <label>1</label>
    </ligand>
</feature>
<feature type="binding site" evidence="1">
    <location>
        <position position="180"/>
    </location>
    <ligand>
        <name>Fe cation</name>
        <dbReference type="ChEBI" id="CHEBI:24875"/>
        <label>2</label>
    </ligand>
</feature>
<feature type="binding site" evidence="1">
    <location>
        <position position="183"/>
    </location>
    <ligand>
        <name>Fe cation</name>
        <dbReference type="ChEBI" id="CHEBI:24875"/>
        <label>2</label>
    </ligand>
</feature>